<evidence type="ECO:0000255" key="1">
    <source>
        <dbReference type="HAMAP-Rule" id="MF_00311"/>
    </source>
</evidence>
<name>AATE_PYRAB</name>
<comment type="function">
    <text evidence="1">Component of the A-type ATP synthase that produces ATP from ADP in the presence of a proton gradient across the membrane.</text>
</comment>
<comment type="subunit">
    <text evidence="1">Has multiple subunits with at least A(3), B(3), C, D, E, F, H, I and proteolipid K(x).</text>
</comment>
<comment type="subcellular location">
    <subcellularLocation>
        <location evidence="1">Cell membrane</location>
        <topology evidence="1">Peripheral membrane protein</topology>
    </subcellularLocation>
</comment>
<comment type="similarity">
    <text evidence="1">Belongs to the V-ATPase E subunit family.</text>
</comment>
<keyword id="KW-0066">ATP synthesis</keyword>
<keyword id="KW-1003">Cell membrane</keyword>
<keyword id="KW-0375">Hydrogen ion transport</keyword>
<keyword id="KW-0406">Ion transport</keyword>
<keyword id="KW-0472">Membrane</keyword>
<keyword id="KW-0813">Transport</keyword>
<organism>
    <name type="scientific">Pyrococcus abyssi (strain GE5 / Orsay)</name>
    <dbReference type="NCBI Taxonomy" id="272844"/>
    <lineage>
        <taxon>Archaea</taxon>
        <taxon>Methanobacteriati</taxon>
        <taxon>Methanobacteriota</taxon>
        <taxon>Thermococci</taxon>
        <taxon>Thermococcales</taxon>
        <taxon>Thermococcaceae</taxon>
        <taxon>Pyrococcus</taxon>
    </lineage>
</organism>
<protein>
    <recommendedName>
        <fullName evidence="1">A-type ATP synthase subunit E</fullName>
    </recommendedName>
</protein>
<gene>
    <name evidence="1" type="primary">atpE</name>
    <name type="ordered locus">PYRAB17640</name>
    <name type="ORF">PAB1182</name>
</gene>
<feature type="chain" id="PRO_0000117320" description="A-type ATP synthase subunit E">
    <location>
        <begin position="1"/>
        <end position="199"/>
    </location>
</feature>
<proteinExistence type="inferred from homology"/>
<reference key="1">
    <citation type="journal article" date="2003" name="Mol. Microbiol.">
        <title>An integrated analysis of the genome of the hyperthermophilic archaeon Pyrococcus abyssi.</title>
        <authorList>
            <person name="Cohen G.N."/>
            <person name="Barbe V."/>
            <person name="Flament D."/>
            <person name="Galperin M."/>
            <person name="Heilig R."/>
            <person name="Lecompte O."/>
            <person name="Poch O."/>
            <person name="Prieur D."/>
            <person name="Querellou J."/>
            <person name="Ripp R."/>
            <person name="Thierry J.-C."/>
            <person name="Van der Oost J."/>
            <person name="Weissenbach J."/>
            <person name="Zivanovic Y."/>
            <person name="Forterre P."/>
        </authorList>
    </citation>
    <scope>NUCLEOTIDE SEQUENCE [LARGE SCALE GENOMIC DNA]</scope>
    <source>
        <strain>GE5 / Orsay</strain>
    </source>
</reference>
<reference key="2">
    <citation type="journal article" date="2012" name="Curr. Microbiol.">
        <title>Re-annotation of two hyperthermophilic archaea Pyrococcus abyssi GE5 and Pyrococcus furiosus DSM 3638.</title>
        <authorList>
            <person name="Gao J."/>
            <person name="Wang J."/>
        </authorList>
    </citation>
    <scope>GENOME REANNOTATION</scope>
    <source>
        <strain>GE5 / Orsay</strain>
    </source>
</reference>
<sequence length="199" mass="23133">MSGAELIIQEINREAERKIEYILNEAREEAEKIKEEAKRRAESKAEWILRRAKTQAELEKQRIIANARLEVRRKRLAVQEEIIRNVLDEVRKRLQEMPEEEYFESIKALLKEAVEELKEGKVRVYSNERTLALISSRIEEIRDYLGSISIEIGSAISTMGGVIVETEDGRIRIDNTFEARMERFEGEIRAKIAKVLFGG</sequence>
<accession>Q9UXU4</accession>
<accession>G8ZKU7</accession>
<dbReference type="EMBL" id="AJ248288">
    <property type="protein sequence ID" value="CAB50669.1"/>
    <property type="molecule type" value="Genomic_DNA"/>
</dbReference>
<dbReference type="EMBL" id="HE613800">
    <property type="protein sequence ID" value="CCE71238.1"/>
    <property type="molecule type" value="Genomic_DNA"/>
</dbReference>
<dbReference type="PIR" id="G75028">
    <property type="entry name" value="G75028"/>
</dbReference>
<dbReference type="RefSeq" id="WP_010868883.1">
    <property type="nucleotide sequence ID" value="NC_000868.1"/>
</dbReference>
<dbReference type="SMR" id="Q9UXU4"/>
<dbReference type="STRING" id="272844.PAB1182"/>
<dbReference type="KEGG" id="pab:PAB1182"/>
<dbReference type="PATRIC" id="fig|272844.11.peg.1883"/>
<dbReference type="eggNOG" id="arCOG00869">
    <property type="taxonomic scope" value="Archaea"/>
</dbReference>
<dbReference type="HOGENOM" id="CLU_105846_1_0_2"/>
<dbReference type="OrthoDB" id="4691at2157"/>
<dbReference type="PhylomeDB" id="Q9UXU4"/>
<dbReference type="Proteomes" id="UP000000810">
    <property type="component" value="Chromosome"/>
</dbReference>
<dbReference type="Proteomes" id="UP000009139">
    <property type="component" value="Chromosome"/>
</dbReference>
<dbReference type="GO" id="GO:0005886">
    <property type="term" value="C:plasma membrane"/>
    <property type="evidence" value="ECO:0007669"/>
    <property type="project" value="UniProtKB-SubCell"/>
</dbReference>
<dbReference type="GO" id="GO:0033178">
    <property type="term" value="C:proton-transporting two-sector ATPase complex, catalytic domain"/>
    <property type="evidence" value="ECO:0007669"/>
    <property type="project" value="InterPro"/>
</dbReference>
<dbReference type="GO" id="GO:0005524">
    <property type="term" value="F:ATP binding"/>
    <property type="evidence" value="ECO:0007669"/>
    <property type="project" value="UniProtKB-UniRule"/>
</dbReference>
<dbReference type="GO" id="GO:0046933">
    <property type="term" value="F:proton-transporting ATP synthase activity, rotational mechanism"/>
    <property type="evidence" value="ECO:0007669"/>
    <property type="project" value="UniProtKB-UniRule"/>
</dbReference>
<dbReference type="GO" id="GO:0046961">
    <property type="term" value="F:proton-transporting ATPase activity, rotational mechanism"/>
    <property type="evidence" value="ECO:0007669"/>
    <property type="project" value="InterPro"/>
</dbReference>
<dbReference type="GO" id="GO:0042777">
    <property type="term" value="P:proton motive force-driven plasma membrane ATP synthesis"/>
    <property type="evidence" value="ECO:0007669"/>
    <property type="project" value="UniProtKB-UniRule"/>
</dbReference>
<dbReference type="Gene3D" id="3.30.2320.30">
    <property type="entry name" value="ATP synthase, E subunit, C-terminal"/>
    <property type="match status" value="1"/>
</dbReference>
<dbReference type="Gene3D" id="1.20.5.620">
    <property type="entry name" value="F1F0 ATP synthase subunit B, membrane domain"/>
    <property type="match status" value="1"/>
</dbReference>
<dbReference type="HAMAP" id="MF_00311">
    <property type="entry name" value="ATP_synth_E_arch"/>
    <property type="match status" value="1"/>
</dbReference>
<dbReference type="InterPro" id="IPR038495">
    <property type="entry name" value="ATPase_E_C"/>
</dbReference>
<dbReference type="InterPro" id="IPR002842">
    <property type="entry name" value="ATPase_V1_Esu"/>
</dbReference>
<dbReference type="NCBIfam" id="NF003049">
    <property type="entry name" value="PRK03963.1"/>
    <property type="match status" value="1"/>
</dbReference>
<dbReference type="PANTHER" id="PTHR45715">
    <property type="entry name" value="ATPASE H+-TRANSPORTING V1 SUBUNIT E1A-RELATED"/>
    <property type="match status" value="1"/>
</dbReference>
<dbReference type="Pfam" id="PF01991">
    <property type="entry name" value="vATP-synt_E"/>
    <property type="match status" value="1"/>
</dbReference>
<dbReference type="SUPFAM" id="SSF160527">
    <property type="entry name" value="V-type ATPase subunit E-like"/>
    <property type="match status" value="1"/>
</dbReference>